<reference key="1">
    <citation type="submission" date="2007-08" db="EMBL/GenBank/DDBJ databases">
        <authorList>
            <consortium name="The Vibrio harveyi Genome Sequencing Project"/>
            <person name="Bassler B."/>
            <person name="Clifton S.W."/>
            <person name="Fulton L."/>
            <person name="Delehaunty K."/>
            <person name="Fronick C."/>
            <person name="Harrison M."/>
            <person name="Markivic C."/>
            <person name="Fulton R."/>
            <person name="Tin-Wollam A.-M."/>
            <person name="Shah N."/>
            <person name="Pepin K."/>
            <person name="Nash W."/>
            <person name="Thiruvilangam P."/>
            <person name="Bhonagiri V."/>
            <person name="Waters C."/>
            <person name="Tu K.C."/>
            <person name="Irgon J."/>
            <person name="Wilson R.K."/>
        </authorList>
    </citation>
    <scope>NUCLEOTIDE SEQUENCE [LARGE SCALE GENOMIC DNA]</scope>
    <source>
        <strain>ATCC BAA-1116 / BB120</strain>
    </source>
</reference>
<feature type="chain" id="PRO_1000069804" description="7-cyano-7-deazaguanine synthase">
    <location>
        <begin position="1"/>
        <end position="232"/>
    </location>
</feature>
<feature type="binding site" evidence="1">
    <location>
        <begin position="8"/>
        <end position="18"/>
    </location>
    <ligand>
        <name>ATP</name>
        <dbReference type="ChEBI" id="CHEBI:30616"/>
    </ligand>
</feature>
<feature type="binding site" evidence="1">
    <location>
        <position position="187"/>
    </location>
    <ligand>
        <name>Zn(2+)</name>
        <dbReference type="ChEBI" id="CHEBI:29105"/>
    </ligand>
</feature>
<feature type="binding site" evidence="1">
    <location>
        <position position="196"/>
    </location>
    <ligand>
        <name>Zn(2+)</name>
        <dbReference type="ChEBI" id="CHEBI:29105"/>
    </ligand>
</feature>
<feature type="binding site" evidence="1">
    <location>
        <position position="199"/>
    </location>
    <ligand>
        <name>Zn(2+)</name>
        <dbReference type="ChEBI" id="CHEBI:29105"/>
    </ligand>
</feature>
<feature type="binding site" evidence="1">
    <location>
        <position position="202"/>
    </location>
    <ligand>
        <name>Zn(2+)</name>
        <dbReference type="ChEBI" id="CHEBI:29105"/>
    </ligand>
</feature>
<organism>
    <name type="scientific">Vibrio campbellii (strain ATCC BAA-1116)</name>
    <dbReference type="NCBI Taxonomy" id="2902295"/>
    <lineage>
        <taxon>Bacteria</taxon>
        <taxon>Pseudomonadati</taxon>
        <taxon>Pseudomonadota</taxon>
        <taxon>Gammaproteobacteria</taxon>
        <taxon>Vibrionales</taxon>
        <taxon>Vibrionaceae</taxon>
        <taxon>Vibrio</taxon>
    </lineage>
</organism>
<dbReference type="EC" id="6.3.4.20" evidence="1"/>
<dbReference type="EMBL" id="CP000789">
    <property type="protein sequence ID" value="ABU71346.1"/>
    <property type="molecule type" value="Genomic_DNA"/>
</dbReference>
<dbReference type="RefSeq" id="WP_005426624.1">
    <property type="nucleotide sequence ID" value="NC_022269.1"/>
</dbReference>
<dbReference type="SMR" id="A7MW43"/>
<dbReference type="GeneID" id="67377304"/>
<dbReference type="KEGG" id="vha:VIBHAR_02384"/>
<dbReference type="PATRIC" id="fig|338187.25.peg.317"/>
<dbReference type="UniPathway" id="UPA00391"/>
<dbReference type="Proteomes" id="UP000008152">
    <property type="component" value="Chromosome I"/>
</dbReference>
<dbReference type="GO" id="GO:0005524">
    <property type="term" value="F:ATP binding"/>
    <property type="evidence" value="ECO:0007669"/>
    <property type="project" value="UniProtKB-UniRule"/>
</dbReference>
<dbReference type="GO" id="GO:0016879">
    <property type="term" value="F:ligase activity, forming carbon-nitrogen bonds"/>
    <property type="evidence" value="ECO:0007669"/>
    <property type="project" value="UniProtKB-UniRule"/>
</dbReference>
<dbReference type="GO" id="GO:0008270">
    <property type="term" value="F:zinc ion binding"/>
    <property type="evidence" value="ECO:0007669"/>
    <property type="project" value="UniProtKB-UniRule"/>
</dbReference>
<dbReference type="GO" id="GO:0008616">
    <property type="term" value="P:queuosine biosynthetic process"/>
    <property type="evidence" value="ECO:0007669"/>
    <property type="project" value="UniProtKB-UniRule"/>
</dbReference>
<dbReference type="CDD" id="cd01995">
    <property type="entry name" value="QueC-like"/>
    <property type="match status" value="1"/>
</dbReference>
<dbReference type="FunFam" id="3.40.50.620:FF:000017">
    <property type="entry name" value="7-cyano-7-deazaguanine synthase"/>
    <property type="match status" value="1"/>
</dbReference>
<dbReference type="Gene3D" id="3.40.50.620">
    <property type="entry name" value="HUPs"/>
    <property type="match status" value="1"/>
</dbReference>
<dbReference type="HAMAP" id="MF_01633">
    <property type="entry name" value="QueC"/>
    <property type="match status" value="1"/>
</dbReference>
<dbReference type="InterPro" id="IPR018317">
    <property type="entry name" value="QueC"/>
</dbReference>
<dbReference type="InterPro" id="IPR014729">
    <property type="entry name" value="Rossmann-like_a/b/a_fold"/>
</dbReference>
<dbReference type="NCBIfam" id="TIGR00364">
    <property type="entry name" value="7-cyano-7-deazaguanine synthase QueC"/>
    <property type="match status" value="1"/>
</dbReference>
<dbReference type="NCBIfam" id="NF008317">
    <property type="entry name" value="PRK11106.1"/>
    <property type="match status" value="1"/>
</dbReference>
<dbReference type="PANTHER" id="PTHR42914">
    <property type="entry name" value="7-CYANO-7-DEAZAGUANINE SYNTHASE"/>
    <property type="match status" value="1"/>
</dbReference>
<dbReference type="PANTHER" id="PTHR42914:SF1">
    <property type="entry name" value="7-CYANO-7-DEAZAGUANINE SYNTHASE"/>
    <property type="match status" value="1"/>
</dbReference>
<dbReference type="Pfam" id="PF06508">
    <property type="entry name" value="QueC"/>
    <property type="match status" value="1"/>
</dbReference>
<dbReference type="PIRSF" id="PIRSF006293">
    <property type="entry name" value="ExsB"/>
    <property type="match status" value="1"/>
</dbReference>
<dbReference type="SUPFAM" id="SSF52402">
    <property type="entry name" value="Adenine nucleotide alpha hydrolases-like"/>
    <property type="match status" value="1"/>
</dbReference>
<protein>
    <recommendedName>
        <fullName evidence="1">7-cyano-7-deazaguanine synthase</fullName>
        <ecNumber evidence="1">6.3.4.20</ecNumber>
    </recommendedName>
    <alternativeName>
        <fullName evidence="1">7-cyano-7-carbaguanine synthase</fullName>
    </alternativeName>
    <alternativeName>
        <fullName evidence="1">PreQ(0) synthase</fullName>
    </alternativeName>
    <alternativeName>
        <fullName evidence="1">Queuosine biosynthesis protein QueC</fullName>
    </alternativeName>
</protein>
<name>QUEC_VIBC1</name>
<accession>A7MW43</accession>
<proteinExistence type="inferred from homology"/>
<sequence length="232" mass="25592">MKKAVVVFSGGQDSTTCLVQALKEFDEVHAITFDYGQRHKLEIEVAEKVAKDLGVAAHKVMDVGLLNELAISSLTRDDIPVSHELQENGLPNSFVPGRNILFLTLAGIYAYQIGAETVITGVCETDFSGYPDCRDDFVKAMNSALVKGMDRQFEIKTPLMWLNKAETWALADQYDALQLVRESTLTCYNGIIGDGCGDCPSCDLRKAGLDDYLNNKDAVMQSLIQKQKSEDQ</sequence>
<keyword id="KW-0067">ATP-binding</keyword>
<keyword id="KW-0436">Ligase</keyword>
<keyword id="KW-0479">Metal-binding</keyword>
<keyword id="KW-0547">Nucleotide-binding</keyword>
<keyword id="KW-0671">Queuosine biosynthesis</keyword>
<keyword id="KW-0862">Zinc</keyword>
<comment type="function">
    <text evidence="1">Catalyzes the ATP-dependent conversion of 7-carboxy-7-deazaguanine (CDG) to 7-cyano-7-deazaguanine (preQ(0)).</text>
</comment>
<comment type="catalytic activity">
    <reaction evidence="1">
        <text>7-carboxy-7-deazaguanine + NH4(+) + ATP = 7-cyano-7-deazaguanine + ADP + phosphate + H2O + H(+)</text>
        <dbReference type="Rhea" id="RHEA:27982"/>
        <dbReference type="ChEBI" id="CHEBI:15377"/>
        <dbReference type="ChEBI" id="CHEBI:15378"/>
        <dbReference type="ChEBI" id="CHEBI:28938"/>
        <dbReference type="ChEBI" id="CHEBI:30616"/>
        <dbReference type="ChEBI" id="CHEBI:43474"/>
        <dbReference type="ChEBI" id="CHEBI:45075"/>
        <dbReference type="ChEBI" id="CHEBI:61036"/>
        <dbReference type="ChEBI" id="CHEBI:456216"/>
        <dbReference type="EC" id="6.3.4.20"/>
    </reaction>
</comment>
<comment type="cofactor">
    <cofactor evidence="1">
        <name>Zn(2+)</name>
        <dbReference type="ChEBI" id="CHEBI:29105"/>
    </cofactor>
    <text evidence="1">Binds 1 zinc ion per subunit.</text>
</comment>
<comment type="pathway">
    <text evidence="1">Purine metabolism; 7-cyano-7-deazaguanine biosynthesis.</text>
</comment>
<comment type="similarity">
    <text evidence="1">Belongs to the QueC family.</text>
</comment>
<gene>
    <name evidence="1" type="primary">queC</name>
    <name type="ordered locus">VIBHAR_02384</name>
</gene>
<evidence type="ECO:0000255" key="1">
    <source>
        <dbReference type="HAMAP-Rule" id="MF_01633"/>
    </source>
</evidence>